<evidence type="ECO:0000250" key="1"/>
<evidence type="ECO:0000255" key="2">
    <source>
        <dbReference type="PROSITE-ProRule" id="PRU00599"/>
    </source>
</evidence>
<evidence type="ECO:0000305" key="3"/>
<sequence>MSRSGVAVADESLTAFNDLKLGKKYKFVLFGLNADKTSIIVKETSNERDYDVFLEKLPEDDCLYAVYDFEYEISGAEGKRSKIVFFTWSPDTAPIRSKMVYASSKDALRRALNGVSSDIQGTDFSEVAYESVLEKVSRGAGSH</sequence>
<reference key="1">
    <citation type="journal article" date="2004" name="Science">
        <title>The Ashbya gossypii genome as a tool for mapping the ancient Saccharomyces cerevisiae genome.</title>
        <authorList>
            <person name="Dietrich F.S."/>
            <person name="Voegeli S."/>
            <person name="Brachat S."/>
            <person name="Lerch A."/>
            <person name="Gates K."/>
            <person name="Steiner S."/>
            <person name="Mohr C."/>
            <person name="Poehlmann R."/>
            <person name="Luedi P."/>
            <person name="Choi S."/>
            <person name="Wing R.A."/>
            <person name="Flavier A."/>
            <person name="Gaffney T.D."/>
            <person name="Philippsen P."/>
        </authorList>
    </citation>
    <scope>NUCLEOTIDE SEQUENCE [LARGE SCALE GENOMIC DNA]</scope>
    <source>
        <strain>ATCC 10895 / CBS 109.51 / FGSC 9923 / NRRL Y-1056</strain>
    </source>
</reference>
<reference key="2">
    <citation type="journal article" date="2013" name="G3 (Bethesda)">
        <title>Genomes of Ashbya fungi isolated from insects reveal four mating-type loci, numerous translocations, lack of transposons, and distinct gene duplications.</title>
        <authorList>
            <person name="Dietrich F.S."/>
            <person name="Voegeli S."/>
            <person name="Kuo S."/>
            <person name="Philippsen P."/>
        </authorList>
    </citation>
    <scope>GENOME REANNOTATION</scope>
    <source>
        <strain>ATCC 10895 / CBS 109.51 / FGSC 9923 / NRRL Y-1056</strain>
    </source>
</reference>
<dbReference type="EMBL" id="AE016817">
    <property type="protein sequence ID" value="AAS52155.1"/>
    <property type="molecule type" value="Genomic_DNA"/>
</dbReference>
<dbReference type="RefSeq" id="NP_984331.1">
    <property type="nucleotide sequence ID" value="NM_209684.1"/>
</dbReference>
<dbReference type="SMR" id="Q759P0"/>
<dbReference type="FunCoup" id="Q759P0">
    <property type="interactions" value="842"/>
</dbReference>
<dbReference type="STRING" id="284811.Q759P0"/>
<dbReference type="EnsemblFungi" id="AAS52155">
    <property type="protein sequence ID" value="AAS52155"/>
    <property type="gene ID" value="AGOS_ADR235W"/>
</dbReference>
<dbReference type="GeneID" id="4620493"/>
<dbReference type="KEGG" id="ago:AGOS_ADR235W"/>
<dbReference type="eggNOG" id="KOG1735">
    <property type="taxonomic scope" value="Eukaryota"/>
</dbReference>
<dbReference type="HOGENOM" id="CLU_094004_3_2_1"/>
<dbReference type="InParanoid" id="Q759P0"/>
<dbReference type="OMA" id="QCRFAVY"/>
<dbReference type="OrthoDB" id="10249245at2759"/>
<dbReference type="Proteomes" id="UP000000591">
    <property type="component" value="Chromosome IV"/>
</dbReference>
<dbReference type="GO" id="GO:0030479">
    <property type="term" value="C:actin cortical patch"/>
    <property type="evidence" value="ECO:0000318"/>
    <property type="project" value="GO_Central"/>
</dbReference>
<dbReference type="GO" id="GO:0015629">
    <property type="term" value="C:actin cytoskeleton"/>
    <property type="evidence" value="ECO:0000318"/>
    <property type="project" value="GO_Central"/>
</dbReference>
<dbReference type="GO" id="GO:0005737">
    <property type="term" value="C:cytoplasm"/>
    <property type="evidence" value="ECO:0000318"/>
    <property type="project" value="GO_Central"/>
</dbReference>
<dbReference type="GO" id="GO:0016363">
    <property type="term" value="C:nuclear matrix"/>
    <property type="evidence" value="ECO:0007669"/>
    <property type="project" value="UniProtKB-SubCell"/>
</dbReference>
<dbReference type="GO" id="GO:0051015">
    <property type="term" value="F:actin filament binding"/>
    <property type="evidence" value="ECO:0000318"/>
    <property type="project" value="GO_Central"/>
</dbReference>
<dbReference type="GO" id="GO:0030042">
    <property type="term" value="P:actin filament depolymerization"/>
    <property type="evidence" value="ECO:0000318"/>
    <property type="project" value="GO_Central"/>
</dbReference>
<dbReference type="GO" id="GO:0051014">
    <property type="term" value="P:actin filament severing"/>
    <property type="evidence" value="ECO:0000318"/>
    <property type="project" value="GO_Central"/>
</dbReference>
<dbReference type="GO" id="GO:0051301">
    <property type="term" value="P:cell division"/>
    <property type="evidence" value="ECO:0007669"/>
    <property type="project" value="UniProtKB-KW"/>
</dbReference>
<dbReference type="GO" id="GO:0006897">
    <property type="term" value="P:endocytosis"/>
    <property type="evidence" value="ECO:0007669"/>
    <property type="project" value="EnsemblFungi"/>
</dbReference>
<dbReference type="GO" id="GO:0043001">
    <property type="term" value="P:Golgi to plasma membrane protein transport"/>
    <property type="evidence" value="ECO:0007669"/>
    <property type="project" value="EnsemblFungi"/>
</dbReference>
<dbReference type="CDD" id="cd11286">
    <property type="entry name" value="ADF_cofilin_like"/>
    <property type="match status" value="1"/>
</dbReference>
<dbReference type="FunFam" id="3.40.20.10:FF:000060">
    <property type="entry name" value="Cofilin"/>
    <property type="match status" value="1"/>
</dbReference>
<dbReference type="Gene3D" id="3.40.20.10">
    <property type="entry name" value="Severin"/>
    <property type="match status" value="1"/>
</dbReference>
<dbReference type="InterPro" id="IPR002108">
    <property type="entry name" value="ADF-H"/>
</dbReference>
<dbReference type="InterPro" id="IPR029006">
    <property type="entry name" value="ADF-H/Gelsolin-like_dom_sf"/>
</dbReference>
<dbReference type="InterPro" id="IPR017904">
    <property type="entry name" value="ADF/Cofilin"/>
</dbReference>
<dbReference type="PANTHER" id="PTHR11913">
    <property type="entry name" value="COFILIN-RELATED"/>
    <property type="match status" value="1"/>
</dbReference>
<dbReference type="Pfam" id="PF00241">
    <property type="entry name" value="Cofilin_ADF"/>
    <property type="match status" value="1"/>
</dbReference>
<dbReference type="SMART" id="SM00102">
    <property type="entry name" value="ADF"/>
    <property type="match status" value="1"/>
</dbReference>
<dbReference type="SUPFAM" id="SSF55753">
    <property type="entry name" value="Actin depolymerizing proteins"/>
    <property type="match status" value="1"/>
</dbReference>
<dbReference type="PROSITE" id="PS51263">
    <property type="entry name" value="ADF_H"/>
    <property type="match status" value="1"/>
</dbReference>
<comment type="function">
    <text evidence="1">Controls reversibly actin polymerization and depolymerization in a pH-sensitive manner. It has the ability to bind G- and F-actin in a 1:1 ratio of cofilin to actin. Binding to F-actin is regulated by tropomyosin. It is the major component of intranuclear and cytoplasmic actin rods. Required for accumulation of actin at the cell division site via depolymerizing actin at the cell ends. In association with myosin II has a role in the assembly of the contractile ring via severing actin filaments. Involved in the maintenance of the contractile ring once formed. In association with profilin and capping protein, has a role in the mitotic reorganization of the actin cytoskeleton (By similarity).</text>
</comment>
<comment type="subcellular location">
    <subcellularLocation>
        <location evidence="1">Cytoplasm</location>
    </subcellularLocation>
    <subcellularLocation>
        <location evidence="1">Cytoplasm</location>
        <location evidence="1">Cytoskeleton</location>
    </subcellularLocation>
    <subcellularLocation>
        <location evidence="1">Nucleus matrix</location>
    </subcellularLocation>
    <text evidence="1">Throughout the cytoplasm (but not on the cytoplasmic cables) and major component of the cortical actin cytoskeleton.</text>
</comment>
<comment type="similarity">
    <text evidence="3">Belongs to the actin-binding proteins ADF family.</text>
</comment>
<accession>Q759P0</accession>
<name>COFI_EREGS</name>
<proteinExistence type="inferred from homology"/>
<feature type="chain" id="PRO_0000255621" description="Cofilin">
    <location>
        <begin position="1"/>
        <end position="143"/>
    </location>
</feature>
<feature type="domain" description="ADF-H" evidence="2">
    <location>
        <begin position="5"/>
        <end position="137"/>
    </location>
</feature>
<keyword id="KW-0009">Actin-binding</keyword>
<keyword id="KW-0131">Cell cycle</keyword>
<keyword id="KW-0132">Cell division</keyword>
<keyword id="KW-0963">Cytoplasm</keyword>
<keyword id="KW-0206">Cytoskeleton</keyword>
<keyword id="KW-0539">Nucleus</keyword>
<keyword id="KW-1185">Reference proteome</keyword>
<organism>
    <name type="scientific">Eremothecium gossypii (strain ATCC 10895 / CBS 109.51 / FGSC 9923 / NRRL Y-1056)</name>
    <name type="common">Yeast</name>
    <name type="synonym">Ashbya gossypii</name>
    <dbReference type="NCBI Taxonomy" id="284811"/>
    <lineage>
        <taxon>Eukaryota</taxon>
        <taxon>Fungi</taxon>
        <taxon>Dikarya</taxon>
        <taxon>Ascomycota</taxon>
        <taxon>Saccharomycotina</taxon>
        <taxon>Saccharomycetes</taxon>
        <taxon>Saccharomycetales</taxon>
        <taxon>Saccharomycetaceae</taxon>
        <taxon>Eremothecium</taxon>
    </lineage>
</organism>
<protein>
    <recommendedName>
        <fullName>Cofilin</fullName>
    </recommendedName>
    <alternativeName>
        <fullName>Actin-depolymerizing factor 1</fullName>
    </alternativeName>
</protein>
<gene>
    <name type="primary">COF1</name>
    <name type="ordered locus">ADR235W</name>
</gene>